<feature type="chain" id="PRO_1000046184" description="Large ribosomal subunit protein uL11">
    <location>
        <begin position="1"/>
        <end position="144"/>
    </location>
</feature>
<gene>
    <name evidence="1" type="primary">rplK</name>
    <name type="ordered locus">GbCGDNIH1_0543</name>
</gene>
<evidence type="ECO:0000255" key="1">
    <source>
        <dbReference type="HAMAP-Rule" id="MF_00736"/>
    </source>
</evidence>
<evidence type="ECO:0000305" key="2"/>
<accession>Q0BUR1</accession>
<comment type="function">
    <text evidence="1">Forms part of the ribosomal stalk which helps the ribosome interact with GTP-bound translation factors.</text>
</comment>
<comment type="subunit">
    <text evidence="1">Part of the ribosomal stalk of the 50S ribosomal subunit. Interacts with L10 and the large rRNA to form the base of the stalk. L10 forms an elongated spine to which L12 dimers bind in a sequential fashion forming a multimeric L10(L12)X complex.</text>
</comment>
<comment type="PTM">
    <text evidence="1">One or more lysine residues are methylated.</text>
</comment>
<comment type="similarity">
    <text evidence="1">Belongs to the universal ribosomal protein uL11 family.</text>
</comment>
<protein>
    <recommendedName>
        <fullName evidence="1">Large ribosomal subunit protein uL11</fullName>
    </recommendedName>
    <alternativeName>
        <fullName evidence="2">50S ribosomal protein L11</fullName>
    </alternativeName>
</protein>
<organism>
    <name type="scientific">Granulibacter bethesdensis (strain ATCC BAA-1260 / CGDNIH1)</name>
    <dbReference type="NCBI Taxonomy" id="391165"/>
    <lineage>
        <taxon>Bacteria</taxon>
        <taxon>Pseudomonadati</taxon>
        <taxon>Pseudomonadota</taxon>
        <taxon>Alphaproteobacteria</taxon>
        <taxon>Acetobacterales</taxon>
        <taxon>Acetobacteraceae</taxon>
        <taxon>Granulibacter</taxon>
    </lineage>
</organism>
<proteinExistence type="inferred from homology"/>
<reference key="1">
    <citation type="journal article" date="2007" name="J. Bacteriol.">
        <title>Genome sequence analysis of the emerging human pathogenic acetic acid bacterium Granulibacter bethesdensis.</title>
        <authorList>
            <person name="Greenberg D.E."/>
            <person name="Porcella S.F."/>
            <person name="Zelazny A.M."/>
            <person name="Virtaneva K."/>
            <person name="Sturdevant D.E."/>
            <person name="Kupko J.J. III"/>
            <person name="Barbian K.D."/>
            <person name="Babar A."/>
            <person name="Dorward D.W."/>
            <person name="Holland S.M."/>
        </authorList>
    </citation>
    <scope>NUCLEOTIDE SEQUENCE [LARGE SCALE GENOMIC DNA]</scope>
    <source>
        <strain>ATCC BAA-1260 / CGDNIH1</strain>
    </source>
</reference>
<keyword id="KW-0488">Methylation</keyword>
<keyword id="KW-1185">Reference proteome</keyword>
<keyword id="KW-0687">Ribonucleoprotein</keyword>
<keyword id="KW-0689">Ribosomal protein</keyword>
<keyword id="KW-0694">RNA-binding</keyword>
<keyword id="KW-0699">rRNA-binding</keyword>
<sequence length="144" mass="15246">MAKKIVGYVKLQIPAGKANPSPPVGPALGQRGLNIMQFCKEFNAATQAMEPGMPVPVVITAYADRTFSFITKTPPNTYFLLKAAKVQKGSPTVGKSAAVGRVTMSQLREIAETKFQDMNANDIDGAVRMLAGSAKSMGLTVVEG</sequence>
<dbReference type="EMBL" id="CP000394">
    <property type="protein sequence ID" value="ABI61441.1"/>
    <property type="molecule type" value="Genomic_DNA"/>
</dbReference>
<dbReference type="RefSeq" id="WP_011631251.1">
    <property type="nucleotide sequence ID" value="NC_008343.2"/>
</dbReference>
<dbReference type="SMR" id="Q0BUR1"/>
<dbReference type="STRING" id="391165.GbCGDNIH1_0543"/>
<dbReference type="KEGG" id="gbe:GbCGDNIH1_0543"/>
<dbReference type="eggNOG" id="COG0080">
    <property type="taxonomic scope" value="Bacteria"/>
</dbReference>
<dbReference type="HOGENOM" id="CLU_074237_2_0_5"/>
<dbReference type="OrthoDB" id="9802408at2"/>
<dbReference type="Proteomes" id="UP000001963">
    <property type="component" value="Chromosome"/>
</dbReference>
<dbReference type="GO" id="GO:0022625">
    <property type="term" value="C:cytosolic large ribosomal subunit"/>
    <property type="evidence" value="ECO:0007669"/>
    <property type="project" value="TreeGrafter"/>
</dbReference>
<dbReference type="GO" id="GO:0070180">
    <property type="term" value="F:large ribosomal subunit rRNA binding"/>
    <property type="evidence" value="ECO:0007669"/>
    <property type="project" value="UniProtKB-UniRule"/>
</dbReference>
<dbReference type="GO" id="GO:0003735">
    <property type="term" value="F:structural constituent of ribosome"/>
    <property type="evidence" value="ECO:0007669"/>
    <property type="project" value="InterPro"/>
</dbReference>
<dbReference type="GO" id="GO:0006412">
    <property type="term" value="P:translation"/>
    <property type="evidence" value="ECO:0007669"/>
    <property type="project" value="UniProtKB-UniRule"/>
</dbReference>
<dbReference type="CDD" id="cd00349">
    <property type="entry name" value="Ribosomal_L11"/>
    <property type="match status" value="1"/>
</dbReference>
<dbReference type="FunFam" id="3.30.1550.10:FF:000001">
    <property type="entry name" value="50S ribosomal protein L11"/>
    <property type="match status" value="1"/>
</dbReference>
<dbReference type="Gene3D" id="1.10.10.250">
    <property type="entry name" value="Ribosomal protein L11, C-terminal domain"/>
    <property type="match status" value="1"/>
</dbReference>
<dbReference type="Gene3D" id="3.30.1550.10">
    <property type="entry name" value="Ribosomal protein L11/L12, N-terminal domain"/>
    <property type="match status" value="1"/>
</dbReference>
<dbReference type="HAMAP" id="MF_00736">
    <property type="entry name" value="Ribosomal_uL11"/>
    <property type="match status" value="1"/>
</dbReference>
<dbReference type="InterPro" id="IPR000911">
    <property type="entry name" value="Ribosomal_uL11"/>
</dbReference>
<dbReference type="InterPro" id="IPR006519">
    <property type="entry name" value="Ribosomal_uL11_bac-typ"/>
</dbReference>
<dbReference type="InterPro" id="IPR020783">
    <property type="entry name" value="Ribosomal_uL11_C"/>
</dbReference>
<dbReference type="InterPro" id="IPR036769">
    <property type="entry name" value="Ribosomal_uL11_C_sf"/>
</dbReference>
<dbReference type="InterPro" id="IPR020785">
    <property type="entry name" value="Ribosomal_uL11_CS"/>
</dbReference>
<dbReference type="InterPro" id="IPR020784">
    <property type="entry name" value="Ribosomal_uL11_N"/>
</dbReference>
<dbReference type="InterPro" id="IPR036796">
    <property type="entry name" value="Ribosomal_uL11_N_sf"/>
</dbReference>
<dbReference type="NCBIfam" id="TIGR01632">
    <property type="entry name" value="L11_bact"/>
    <property type="match status" value="1"/>
</dbReference>
<dbReference type="PANTHER" id="PTHR11661">
    <property type="entry name" value="60S RIBOSOMAL PROTEIN L12"/>
    <property type="match status" value="1"/>
</dbReference>
<dbReference type="PANTHER" id="PTHR11661:SF1">
    <property type="entry name" value="LARGE RIBOSOMAL SUBUNIT PROTEIN UL11M"/>
    <property type="match status" value="1"/>
</dbReference>
<dbReference type="Pfam" id="PF00298">
    <property type="entry name" value="Ribosomal_L11"/>
    <property type="match status" value="1"/>
</dbReference>
<dbReference type="Pfam" id="PF03946">
    <property type="entry name" value="Ribosomal_L11_N"/>
    <property type="match status" value="1"/>
</dbReference>
<dbReference type="SMART" id="SM00649">
    <property type="entry name" value="RL11"/>
    <property type="match status" value="1"/>
</dbReference>
<dbReference type="SUPFAM" id="SSF54747">
    <property type="entry name" value="Ribosomal L11/L12e N-terminal domain"/>
    <property type="match status" value="1"/>
</dbReference>
<dbReference type="SUPFAM" id="SSF46906">
    <property type="entry name" value="Ribosomal protein L11, C-terminal domain"/>
    <property type="match status" value="1"/>
</dbReference>
<dbReference type="PROSITE" id="PS00359">
    <property type="entry name" value="RIBOSOMAL_L11"/>
    <property type="match status" value="1"/>
</dbReference>
<name>RL11_GRABC</name>